<gene>
    <name evidence="1" type="primary">pyrK</name>
    <name type="ordered locus">ABC2332</name>
</gene>
<keyword id="KW-0001">2Fe-2S</keyword>
<keyword id="KW-0249">Electron transport</keyword>
<keyword id="KW-0274">FAD</keyword>
<keyword id="KW-0285">Flavoprotein</keyword>
<keyword id="KW-0408">Iron</keyword>
<keyword id="KW-0411">Iron-sulfur</keyword>
<keyword id="KW-0479">Metal-binding</keyword>
<keyword id="KW-0665">Pyrimidine biosynthesis</keyword>
<keyword id="KW-1185">Reference proteome</keyword>
<keyword id="KW-0813">Transport</keyword>
<dbReference type="EMBL" id="AP006627">
    <property type="protein sequence ID" value="BAD64867.1"/>
    <property type="molecule type" value="Genomic_DNA"/>
</dbReference>
<dbReference type="RefSeq" id="WP_011247175.1">
    <property type="nucleotide sequence ID" value="NC_006582.1"/>
</dbReference>
<dbReference type="SMR" id="Q5WFJ3"/>
<dbReference type="STRING" id="66692.ABC2332"/>
<dbReference type="KEGG" id="bcl:ABC2332"/>
<dbReference type="eggNOG" id="COG0543">
    <property type="taxonomic scope" value="Bacteria"/>
</dbReference>
<dbReference type="HOGENOM" id="CLU_003827_1_2_9"/>
<dbReference type="OrthoDB" id="9778346at2"/>
<dbReference type="UniPathway" id="UPA00070">
    <property type="reaction ID" value="UER00945"/>
</dbReference>
<dbReference type="Proteomes" id="UP000001168">
    <property type="component" value="Chromosome"/>
</dbReference>
<dbReference type="GO" id="GO:0051537">
    <property type="term" value="F:2 iron, 2 sulfur cluster binding"/>
    <property type="evidence" value="ECO:0007669"/>
    <property type="project" value="UniProtKB-KW"/>
</dbReference>
<dbReference type="GO" id="GO:0009055">
    <property type="term" value="F:electron transfer activity"/>
    <property type="evidence" value="ECO:0007669"/>
    <property type="project" value="UniProtKB-UniRule"/>
</dbReference>
<dbReference type="GO" id="GO:0050660">
    <property type="term" value="F:flavin adenine dinucleotide binding"/>
    <property type="evidence" value="ECO:0007669"/>
    <property type="project" value="InterPro"/>
</dbReference>
<dbReference type="GO" id="GO:0046872">
    <property type="term" value="F:metal ion binding"/>
    <property type="evidence" value="ECO:0007669"/>
    <property type="project" value="UniProtKB-KW"/>
</dbReference>
<dbReference type="GO" id="GO:0016491">
    <property type="term" value="F:oxidoreductase activity"/>
    <property type="evidence" value="ECO:0007669"/>
    <property type="project" value="InterPro"/>
</dbReference>
<dbReference type="GO" id="GO:0044205">
    <property type="term" value="P:'de novo' UMP biosynthetic process"/>
    <property type="evidence" value="ECO:0007669"/>
    <property type="project" value="UniProtKB-UniRule"/>
</dbReference>
<dbReference type="CDD" id="cd06218">
    <property type="entry name" value="DHOD_e_trans"/>
    <property type="match status" value="1"/>
</dbReference>
<dbReference type="FunFam" id="2.10.240.10:FF:000001">
    <property type="entry name" value="Dihydroorotate dehydrogenase B (NAD(+)), electron transfer subunit"/>
    <property type="match status" value="1"/>
</dbReference>
<dbReference type="FunFam" id="3.40.50.80:FF:000017">
    <property type="entry name" value="Dihydroorotate dehydrogenase B (NAD(+)), electron transfer subunit"/>
    <property type="match status" value="1"/>
</dbReference>
<dbReference type="Gene3D" id="2.10.240.10">
    <property type="entry name" value="Dihydroorotate dehydrogenase, electron transfer subunit"/>
    <property type="match status" value="1"/>
</dbReference>
<dbReference type="Gene3D" id="3.40.50.80">
    <property type="entry name" value="Nucleotide-binding domain of ferredoxin-NADP reductase (FNR) module"/>
    <property type="match status" value="1"/>
</dbReference>
<dbReference type="Gene3D" id="2.40.30.10">
    <property type="entry name" value="Translation factors"/>
    <property type="match status" value="1"/>
</dbReference>
<dbReference type="HAMAP" id="MF_01211">
    <property type="entry name" value="DHODB_Fe_S_bind"/>
    <property type="match status" value="1"/>
</dbReference>
<dbReference type="InterPro" id="IPR008333">
    <property type="entry name" value="Cbr1-like_FAD-bd_dom"/>
</dbReference>
<dbReference type="InterPro" id="IPR012165">
    <property type="entry name" value="Cyt_c3_hydrogenase_gsu"/>
</dbReference>
<dbReference type="InterPro" id="IPR037117">
    <property type="entry name" value="Dihydroorotate_DH_ele_sf"/>
</dbReference>
<dbReference type="InterPro" id="IPR019480">
    <property type="entry name" value="Dihydroorotate_DH_Fe-S-bd"/>
</dbReference>
<dbReference type="InterPro" id="IPR023455">
    <property type="entry name" value="Dihydroorotate_DHASE_ETsu"/>
</dbReference>
<dbReference type="InterPro" id="IPR017927">
    <property type="entry name" value="FAD-bd_FR_type"/>
</dbReference>
<dbReference type="InterPro" id="IPR039261">
    <property type="entry name" value="FNR_nucleotide-bd"/>
</dbReference>
<dbReference type="InterPro" id="IPR001433">
    <property type="entry name" value="OxRdtase_FAD/NAD-bd"/>
</dbReference>
<dbReference type="InterPro" id="IPR050353">
    <property type="entry name" value="PyrK_electron_transfer"/>
</dbReference>
<dbReference type="InterPro" id="IPR017938">
    <property type="entry name" value="Riboflavin_synthase-like_b-brl"/>
</dbReference>
<dbReference type="NCBIfam" id="NF000797">
    <property type="entry name" value="PRK00054.1-2"/>
    <property type="match status" value="1"/>
</dbReference>
<dbReference type="NCBIfam" id="NF000799">
    <property type="entry name" value="PRK00054.1-4"/>
    <property type="match status" value="1"/>
</dbReference>
<dbReference type="PANTHER" id="PTHR43513">
    <property type="entry name" value="DIHYDROOROTATE DEHYDROGENASE B (NAD(+)), ELECTRON TRANSFER SUBUNIT"/>
    <property type="match status" value="1"/>
</dbReference>
<dbReference type="PANTHER" id="PTHR43513:SF3">
    <property type="entry name" value="DIHYDROOROTATE DEHYDROGENASE B (NAD(+)), ELECTRON TRANSFER SUBUNIT-RELATED"/>
    <property type="match status" value="1"/>
</dbReference>
<dbReference type="Pfam" id="PF10418">
    <property type="entry name" value="DHODB_Fe-S_bind"/>
    <property type="match status" value="1"/>
</dbReference>
<dbReference type="Pfam" id="PF00970">
    <property type="entry name" value="FAD_binding_6"/>
    <property type="match status" value="1"/>
</dbReference>
<dbReference type="Pfam" id="PF00175">
    <property type="entry name" value="NAD_binding_1"/>
    <property type="match status" value="1"/>
</dbReference>
<dbReference type="PIRSF" id="PIRSF006816">
    <property type="entry name" value="Cyc3_hyd_g"/>
    <property type="match status" value="1"/>
</dbReference>
<dbReference type="PRINTS" id="PR00409">
    <property type="entry name" value="PHDIOXRDTASE"/>
</dbReference>
<dbReference type="SUPFAM" id="SSF52343">
    <property type="entry name" value="Ferredoxin reductase-like, C-terminal NADP-linked domain"/>
    <property type="match status" value="1"/>
</dbReference>
<dbReference type="SUPFAM" id="SSF63380">
    <property type="entry name" value="Riboflavin synthase domain-like"/>
    <property type="match status" value="1"/>
</dbReference>
<dbReference type="PROSITE" id="PS51384">
    <property type="entry name" value="FAD_FR"/>
    <property type="match status" value="1"/>
</dbReference>
<comment type="function">
    <text evidence="1">Responsible for channeling the electrons from the oxidation of dihydroorotate from the FMN redox center in the PyrD type B subunit to the ultimate electron acceptor NAD(+).</text>
</comment>
<comment type="cofactor">
    <cofactor evidence="1">
        <name>[2Fe-2S] cluster</name>
        <dbReference type="ChEBI" id="CHEBI:190135"/>
    </cofactor>
    <text evidence="1">Binds 1 [2Fe-2S] cluster per subunit.</text>
</comment>
<comment type="cofactor">
    <cofactor evidence="1">
        <name>FAD</name>
        <dbReference type="ChEBI" id="CHEBI:57692"/>
    </cofactor>
    <text evidence="1">Binds 1 FAD per subunit.</text>
</comment>
<comment type="pathway">
    <text evidence="1">Pyrimidine metabolism; UMP biosynthesis via de novo pathway; orotate from (S)-dihydroorotate (NAD(+) route): step 1/1.</text>
</comment>
<comment type="subunit">
    <text evidence="1">Heterotetramer of 2 PyrK and 2 PyrD type B subunits.</text>
</comment>
<comment type="similarity">
    <text evidence="1">Belongs to the PyrK family.</text>
</comment>
<organism>
    <name type="scientific">Shouchella clausii (strain KSM-K16)</name>
    <name type="common">Alkalihalobacillus clausii</name>
    <dbReference type="NCBI Taxonomy" id="66692"/>
    <lineage>
        <taxon>Bacteria</taxon>
        <taxon>Bacillati</taxon>
        <taxon>Bacillota</taxon>
        <taxon>Bacilli</taxon>
        <taxon>Bacillales</taxon>
        <taxon>Bacillaceae</taxon>
        <taxon>Shouchella</taxon>
    </lineage>
</organism>
<accession>Q5WFJ3</accession>
<feature type="chain" id="PRO_1000066401" description="Dihydroorotate dehydrogenase B (NAD(+)), electron transfer subunit">
    <location>
        <begin position="1"/>
        <end position="259"/>
    </location>
</feature>
<feature type="domain" description="FAD-binding FR-type" evidence="1">
    <location>
        <begin position="3"/>
        <end position="103"/>
    </location>
</feature>
<feature type="binding site" evidence="1">
    <location>
        <begin position="54"/>
        <end position="57"/>
    </location>
    <ligand>
        <name>FAD</name>
        <dbReference type="ChEBI" id="CHEBI:57692"/>
    </ligand>
</feature>
<feature type="binding site" evidence="1">
    <location>
        <begin position="71"/>
        <end position="73"/>
    </location>
    <ligand>
        <name>FAD</name>
        <dbReference type="ChEBI" id="CHEBI:57692"/>
    </ligand>
</feature>
<feature type="binding site" evidence="1">
    <location>
        <begin position="78"/>
        <end position="79"/>
    </location>
    <ligand>
        <name>FAD</name>
        <dbReference type="ChEBI" id="CHEBI:57692"/>
    </ligand>
</feature>
<feature type="binding site" evidence="1">
    <location>
        <position position="222"/>
    </location>
    <ligand>
        <name>[2Fe-2S] cluster</name>
        <dbReference type="ChEBI" id="CHEBI:190135"/>
    </ligand>
</feature>
<feature type="binding site" evidence="1">
    <location>
        <position position="227"/>
    </location>
    <ligand>
        <name>[2Fe-2S] cluster</name>
        <dbReference type="ChEBI" id="CHEBI:190135"/>
    </ligand>
</feature>
<feature type="binding site" evidence="1">
    <location>
        <position position="230"/>
    </location>
    <ligand>
        <name>[2Fe-2S] cluster</name>
        <dbReference type="ChEBI" id="CHEBI:190135"/>
    </ligand>
</feature>
<feature type="binding site" evidence="1">
    <location>
        <position position="246"/>
    </location>
    <ligand>
        <name>[2Fe-2S] cluster</name>
        <dbReference type="ChEBI" id="CHEBI:190135"/>
    </ligand>
</feature>
<proteinExistence type="inferred from homology"/>
<sequence length="259" mass="28342">MRKKQGRLTIVKQTEVARDSYELVLEGELVKHMSQPGQFLHVRVDESEDLLLRRPISIANIDPEKEQVTMIYRAGGAGTKRLAAQRVGTEVDVLGPLGQGFPLEEAKRGEEVLLVGGGIGVPPLYYLGRRLVENGARVTSVLGFASQADVFYEQPFKQLGNVHIATADGSYGAPGFVTDVISQQSLDFDVLYSCGPTPMLKALTARYRERRAFISLEERMGCGVGACFACVCHVENGQAHEYRKICTDGPVFPVGEVVL</sequence>
<protein>
    <recommendedName>
        <fullName evidence="1">Dihydroorotate dehydrogenase B (NAD(+)), electron transfer subunit</fullName>
    </recommendedName>
    <alternativeName>
        <fullName evidence="1">Dihydroorotate oxidase B, electron transfer subunit</fullName>
    </alternativeName>
</protein>
<reference key="1">
    <citation type="submission" date="2003-10" db="EMBL/GenBank/DDBJ databases">
        <title>The complete genome sequence of the alkaliphilic Bacillus clausii KSM-K16.</title>
        <authorList>
            <person name="Takaki Y."/>
            <person name="Kageyama Y."/>
            <person name="Shimamura S."/>
            <person name="Suzuki H."/>
            <person name="Nishi S."/>
            <person name="Hatada Y."/>
            <person name="Kawai S."/>
            <person name="Ito S."/>
            <person name="Horikoshi K."/>
        </authorList>
    </citation>
    <scope>NUCLEOTIDE SEQUENCE [LARGE SCALE GENOMIC DNA]</scope>
    <source>
        <strain>KSM-K16</strain>
    </source>
</reference>
<name>PYRK_SHOC1</name>
<evidence type="ECO:0000255" key="1">
    <source>
        <dbReference type="HAMAP-Rule" id="MF_01211"/>
    </source>
</evidence>